<reference evidence="6" key="1">
    <citation type="journal article" date="2005" name="Science">
        <title>Comparative genomics of trypanosomatid parasitic protozoa.</title>
        <authorList>
            <person name="El-Sayed N.M."/>
            <person name="Myler P.J."/>
            <person name="Blandin G."/>
            <person name="Berriman M."/>
            <person name="Crabtree J."/>
            <person name="Aggarwal G."/>
            <person name="Caler E."/>
            <person name="Renauld H."/>
            <person name="Worthey E.A."/>
            <person name="Hertz-Fowler C."/>
            <person name="Ghedin E."/>
            <person name="Peacock C."/>
            <person name="Bartholomeu D.C."/>
            <person name="Haas B.J."/>
            <person name="Tran A.N."/>
            <person name="Wortman J.R."/>
            <person name="Alsmark U.C."/>
            <person name="Angiuoli S."/>
            <person name="Anupama A."/>
            <person name="Badger J."/>
            <person name="Bringaud F."/>
            <person name="Cadag E."/>
            <person name="Carlton J.M."/>
            <person name="Cerqueira G.C."/>
            <person name="Creasy T."/>
            <person name="Delcher A.L."/>
            <person name="Djikeng A."/>
            <person name="Embley T.M."/>
            <person name="Hauser C."/>
            <person name="Ivens A.C."/>
            <person name="Kummerfeld S.K."/>
            <person name="Pereira-Leal J.B."/>
            <person name="Nilsson D."/>
            <person name="Peterson J."/>
            <person name="Salzberg S.L."/>
            <person name="Shallom J."/>
            <person name="Silva J.C."/>
            <person name="Sundaram J."/>
            <person name="Westenberger S."/>
            <person name="White O."/>
            <person name="Melville S.E."/>
            <person name="Donelson J.E."/>
            <person name="Andersson B."/>
            <person name="Stuart K.D."/>
            <person name="Hall N."/>
        </authorList>
    </citation>
    <scope>NUCLEOTIDE SEQUENCE [LARGE SCALE GENOMIC DNA]</scope>
    <source>
        <strain evidence="6">927/4 GUTat10.1</strain>
    </source>
</reference>
<reference evidence="7" key="2">
    <citation type="journal article" date="2005" name="Science">
        <title>The genome of the African trypanosome Trypanosoma brucei.</title>
        <authorList>
            <person name="Berriman M."/>
            <person name="Ghedin E."/>
            <person name="Hertz-Fowler C."/>
            <person name="Blandin G."/>
            <person name="Renauld H."/>
            <person name="Bartholomeu D.C."/>
            <person name="Lennard N.J."/>
            <person name="Caler E."/>
            <person name="Hamlin N.E."/>
            <person name="Haas B."/>
            <person name="Bohme U."/>
            <person name="Hannick L."/>
            <person name="Aslett M.A."/>
            <person name="Shallom J."/>
            <person name="Marcello L."/>
            <person name="Hou L."/>
            <person name="Wickstead B."/>
            <person name="Alsmark U.C.M."/>
            <person name="Arrowsmith C."/>
            <person name="Atkin R.J."/>
            <person name="Barron A.J."/>
            <person name="Bringaud F."/>
            <person name="Brooks K."/>
            <person name="Carrington M."/>
            <person name="Cherevach I."/>
            <person name="Chillingworth T.J."/>
            <person name="Churcher C."/>
            <person name="Clark L.N."/>
            <person name="Corton C.H."/>
            <person name="Cronin A."/>
            <person name="Davies R.M."/>
            <person name="Doggett J."/>
            <person name="Djikeng A."/>
            <person name="Feldblyum T."/>
            <person name="Field M.C."/>
            <person name="Fraser A."/>
            <person name="Goodhead I."/>
            <person name="Hance Z."/>
            <person name="Harper D."/>
            <person name="Harris B.R."/>
            <person name="Hauser H."/>
            <person name="Hostetler J."/>
            <person name="Ivens A."/>
            <person name="Jagels K."/>
            <person name="Johnson D."/>
            <person name="Johnson J."/>
            <person name="Jones K."/>
            <person name="Kerhornou A.X."/>
            <person name="Koo H."/>
            <person name="Larke N."/>
            <person name="Landfear S."/>
            <person name="Larkin C."/>
            <person name="Leech V."/>
            <person name="Line A."/>
            <person name="Lord A."/>
            <person name="Macleod A."/>
            <person name="Mooney P.J."/>
            <person name="Moule S."/>
            <person name="Martin D.M."/>
            <person name="Morgan G.W."/>
            <person name="Mungall K."/>
            <person name="Norbertczak H."/>
            <person name="Ormond D."/>
            <person name="Pai G."/>
            <person name="Peacock C.S."/>
            <person name="Peterson J."/>
            <person name="Quail M.A."/>
            <person name="Rabbinowitsch E."/>
            <person name="Rajandream M.A."/>
            <person name="Reitter C."/>
            <person name="Salzberg S.L."/>
            <person name="Sanders M."/>
            <person name="Schobel S."/>
            <person name="Sharp S."/>
            <person name="Simmonds M."/>
            <person name="Simpson A.J."/>
            <person name="Tallon L."/>
            <person name="Turner C.M."/>
            <person name="Tait A."/>
            <person name="Tivey A.R."/>
            <person name="Van Aken S."/>
            <person name="Walker D."/>
            <person name="Wanless D."/>
            <person name="Wang S."/>
            <person name="White B."/>
            <person name="White O."/>
            <person name="Whitehead S."/>
            <person name="Woodward J."/>
            <person name="Wortman J."/>
            <person name="Adams M.D."/>
            <person name="Embley T.M."/>
            <person name="Gull K."/>
            <person name="Ullu E."/>
            <person name="Barry J.D."/>
            <person name="Fairlamb A.H."/>
            <person name="Opperdoes F."/>
            <person name="Barrell B.G."/>
            <person name="Donelson J.E."/>
            <person name="Hall N."/>
            <person name="Fraser C.M."/>
            <person name="Melville S.E."/>
            <person name="El-Sayed N.M.A."/>
        </authorList>
    </citation>
    <scope>NUCLEOTIDE SEQUENCE [LARGE SCALE GENOMIC DNA]</scope>
    <source>
        <strain evidence="7">927/4 GUTat10.1</strain>
    </source>
</reference>
<reference evidence="4" key="3">
    <citation type="journal article" date="2020" name="J. Biol. Chem.">
        <title>The RNA-associated proteins MKT1 and MKT1L form alternative PBP1-containing complexes in Trypanosoma brucei.</title>
        <authorList>
            <person name="Melo do Nascimento L."/>
            <person name="Terrao M."/>
            <person name="Marucha K.K."/>
            <person name="Liu B."/>
            <person name="Egler F."/>
            <person name="Clayton C."/>
        </authorList>
    </citation>
    <scope>FUNCTION</scope>
    <scope>IDENTIFICATION IN A COMPLEX WITH PBP1; LSM12 AND MKT1 OR MKT1L</scope>
    <scope>SUBCELLULAR LOCATION</scope>
    <scope>DEVELOPMENTAL STAGE</scope>
    <scope>DISRUPTION PHENOTYPE</scope>
    <scope>IDENTIFICATION BY MASS SPECTROMETRY</scope>
    <source>
        <strain evidence="3">427</strain>
    </source>
</reference>
<dbReference type="EMBL" id="AC159408">
    <property type="protein sequence ID" value="AAX69420.1"/>
    <property type="molecule type" value="Genomic_DNA"/>
</dbReference>
<dbReference type="EMBL" id="CP000070">
    <property type="protein sequence ID" value="AAZ12342.1"/>
    <property type="molecule type" value="Genomic_DNA"/>
</dbReference>
<dbReference type="RefSeq" id="XP_845901.1">
    <property type="nucleotide sequence ID" value="XM_840808.1"/>
</dbReference>
<dbReference type="STRING" id="185431.Q57Y88"/>
<dbReference type="PaxDb" id="5691-AAZ12342"/>
<dbReference type="GeneID" id="3658491"/>
<dbReference type="KEGG" id="tbr:Tb927.7.2780"/>
<dbReference type="VEuPathDB" id="TriTrypDB:Tb927.7.2780"/>
<dbReference type="InParanoid" id="Q57Y88"/>
<dbReference type="OMA" id="HEELMDC"/>
<dbReference type="OrthoDB" id="249156at2759"/>
<dbReference type="Proteomes" id="UP000008524">
    <property type="component" value="Chromosome 7"/>
</dbReference>
<dbReference type="GO" id="GO:0005737">
    <property type="term" value="C:cytoplasm"/>
    <property type="evidence" value="ECO:0000314"/>
    <property type="project" value="GeneDB"/>
</dbReference>
<dbReference type="GO" id="GO:0010608">
    <property type="term" value="P:post-transcriptional regulation of gene expression"/>
    <property type="evidence" value="ECO:0000314"/>
    <property type="project" value="GeneDB"/>
</dbReference>
<dbReference type="GO" id="GO:0006417">
    <property type="term" value="P:regulation of translation"/>
    <property type="evidence" value="ECO:0007669"/>
    <property type="project" value="UniProtKB-KW"/>
</dbReference>
<comment type="function">
    <text evidence="2">Involved in post-transcriptional regulation of gene expression.</text>
</comment>
<comment type="subunit">
    <text evidence="2">Forms a complex composed of at least MKT1, PBP1, XAC1 and LSM12 (PubMed:32532821). Forms a complex composed of at least MKT1L, PBP1, XAC1 and LSM12 (PubMed:32532821).</text>
</comment>
<comment type="subcellular location">
    <subcellularLocation>
        <location evidence="2">Cytoplasm</location>
    </subcellularLocation>
</comment>
<comment type="developmental stage">
    <text evidence="2">Expressed in the bloodstream form (at protein level).</text>
</comment>
<comment type="disruption phenotype">
    <text evidence="2">RNAi-mediated knockdown in the bloodstream form abolishes cell population growth.</text>
</comment>
<feature type="chain" id="PRO_0000451928" description="PBP1-interacting protein XAC1">
    <location>
        <begin position="1"/>
        <end position="117"/>
    </location>
</feature>
<feature type="region of interest" description="Disordered" evidence="1">
    <location>
        <begin position="1"/>
        <end position="60"/>
    </location>
</feature>
<feature type="compositionally biased region" description="Low complexity" evidence="1">
    <location>
        <begin position="32"/>
        <end position="44"/>
    </location>
</feature>
<proteinExistence type="evidence at protein level"/>
<protein>
    <recommendedName>
        <fullName evidence="3">PBP1-interacting protein XAC1</fullName>
    </recommendedName>
    <alternativeName>
        <fullName evidence="3">EXpression ACtivator 1</fullName>
    </alternativeName>
</protein>
<gene>
    <name evidence="3" type="primary">XAC1</name>
    <name evidence="5" type="ORF">Tb927.7.2780</name>
</gene>
<keyword id="KW-0963">Cytoplasm</keyword>
<keyword id="KW-1185">Reference proteome</keyword>
<keyword id="KW-0810">Translation regulation</keyword>
<accession>Q57Y88</accession>
<accession>D6XKJ5</accession>
<name>XAC1_TRYB2</name>
<organism evidence="7">
    <name type="scientific">Trypanosoma brucei brucei (strain 927/4 GUTat10.1)</name>
    <dbReference type="NCBI Taxonomy" id="185431"/>
    <lineage>
        <taxon>Eukaryota</taxon>
        <taxon>Discoba</taxon>
        <taxon>Euglenozoa</taxon>
        <taxon>Kinetoplastea</taxon>
        <taxon>Metakinetoplastina</taxon>
        <taxon>Trypanosomatida</taxon>
        <taxon>Trypanosomatidae</taxon>
        <taxon>Trypanosoma</taxon>
    </lineage>
</organism>
<evidence type="ECO:0000256" key="1">
    <source>
        <dbReference type="SAM" id="MobiDB-lite"/>
    </source>
</evidence>
<evidence type="ECO:0000269" key="2">
    <source>
    </source>
</evidence>
<evidence type="ECO:0000303" key="3">
    <source>
    </source>
</evidence>
<evidence type="ECO:0000305" key="4"/>
<evidence type="ECO:0000312" key="5">
    <source>
        <dbReference type="EMBL" id="AAX69420.1"/>
    </source>
</evidence>
<evidence type="ECO:0000312" key="6">
    <source>
        <dbReference type="EMBL" id="AAZ12342.1"/>
    </source>
</evidence>
<evidence type="ECO:0000312" key="7">
    <source>
        <dbReference type="Proteomes" id="UP000008524"/>
    </source>
</evidence>
<sequence length="117" mass="12723">MSKAPSQPAKKWMSARTLAKSEDATNRKSNTAAPASQPSQQPASVMHERPTPPPPAPVQLPQSVFFERQEAVDTLSNLYRNAQSVKKIETGPAAFEARDISKVHEELMDCLRPAAAA</sequence>